<keyword id="KW-0413">Isomerase</keyword>
<keyword id="KW-1185">Reference proteome</keyword>
<keyword id="KW-0819">tRNA processing</keyword>
<protein>
    <recommendedName>
        <fullName evidence="1">tRNA pseudouridine synthase A</fullName>
        <ecNumber evidence="1">5.4.99.12</ecNumber>
    </recommendedName>
    <alternativeName>
        <fullName evidence="1">tRNA pseudouridine(38-40) synthase</fullName>
    </alternativeName>
    <alternativeName>
        <fullName evidence="1">tRNA pseudouridylate synthase I</fullName>
    </alternativeName>
    <alternativeName>
        <fullName evidence="1">tRNA-uridine isomerase I</fullName>
    </alternativeName>
</protein>
<sequence>MPRYKAVIAYDGAEFFGFQLQTKNGVESVRTVQGELNKVINKMAKNPSPQIKVVGASRTDTGVHAFGQVVHFDLPFNIDPEGVRKGMNTLLPFDVVVNHVEHVSDDFHARFNTHSKRYIYRVSTTDYKDPFKRKYTGHFHWKLDINRIKAALPDLLGEHDFASFAASGNETATTIRLITRADVDEKPEEHEIVFTFEGNAFLYNQIRIMVGVLLEIGTGKRPVHDIVRLIEVKDREQARYTAPASGLYLDEIDYN</sequence>
<feature type="chain" id="PRO_1000017106" description="tRNA pseudouridine synthase A">
    <location>
        <begin position="1"/>
        <end position="255"/>
    </location>
</feature>
<feature type="active site" description="Nucleophile" evidence="1">
    <location>
        <position position="60"/>
    </location>
</feature>
<feature type="binding site" evidence="1">
    <location>
        <position position="118"/>
    </location>
    <ligand>
        <name>substrate</name>
    </ligand>
</feature>
<dbReference type="EC" id="5.4.99.12" evidence="1"/>
<dbReference type="EMBL" id="CP000414">
    <property type="protein sequence ID" value="ABJ61359.1"/>
    <property type="molecule type" value="Genomic_DNA"/>
</dbReference>
<dbReference type="RefSeq" id="WP_010281220.1">
    <property type="nucleotide sequence ID" value="NC_008531.1"/>
</dbReference>
<dbReference type="SMR" id="Q03ZL3"/>
<dbReference type="EnsemblBacteria" id="ABJ61359">
    <property type="protein sequence ID" value="ABJ61359"/>
    <property type="gene ID" value="LEUM_0228"/>
</dbReference>
<dbReference type="GeneID" id="29577085"/>
<dbReference type="KEGG" id="lme:LEUM_0228"/>
<dbReference type="eggNOG" id="COG0101">
    <property type="taxonomic scope" value="Bacteria"/>
</dbReference>
<dbReference type="HOGENOM" id="CLU_014673_0_1_9"/>
<dbReference type="Proteomes" id="UP000000362">
    <property type="component" value="Chromosome"/>
</dbReference>
<dbReference type="GO" id="GO:0003723">
    <property type="term" value="F:RNA binding"/>
    <property type="evidence" value="ECO:0007669"/>
    <property type="project" value="InterPro"/>
</dbReference>
<dbReference type="GO" id="GO:0160147">
    <property type="term" value="F:tRNA pseudouridine(38-40) synthase activity"/>
    <property type="evidence" value="ECO:0007669"/>
    <property type="project" value="UniProtKB-EC"/>
</dbReference>
<dbReference type="GO" id="GO:0031119">
    <property type="term" value="P:tRNA pseudouridine synthesis"/>
    <property type="evidence" value="ECO:0007669"/>
    <property type="project" value="UniProtKB-UniRule"/>
</dbReference>
<dbReference type="CDD" id="cd02570">
    <property type="entry name" value="PseudoU_synth_EcTruA"/>
    <property type="match status" value="1"/>
</dbReference>
<dbReference type="FunFam" id="3.30.70.580:FF:000001">
    <property type="entry name" value="tRNA pseudouridine synthase A"/>
    <property type="match status" value="1"/>
</dbReference>
<dbReference type="Gene3D" id="3.30.70.660">
    <property type="entry name" value="Pseudouridine synthase I, catalytic domain, C-terminal subdomain"/>
    <property type="match status" value="1"/>
</dbReference>
<dbReference type="Gene3D" id="3.30.70.580">
    <property type="entry name" value="Pseudouridine synthase I, catalytic domain, N-terminal subdomain"/>
    <property type="match status" value="1"/>
</dbReference>
<dbReference type="HAMAP" id="MF_00171">
    <property type="entry name" value="TruA"/>
    <property type="match status" value="1"/>
</dbReference>
<dbReference type="InterPro" id="IPR020103">
    <property type="entry name" value="PsdUridine_synth_cat_dom_sf"/>
</dbReference>
<dbReference type="InterPro" id="IPR001406">
    <property type="entry name" value="PsdUridine_synth_TruA"/>
</dbReference>
<dbReference type="InterPro" id="IPR020097">
    <property type="entry name" value="PsdUridine_synth_TruA_a/b_dom"/>
</dbReference>
<dbReference type="InterPro" id="IPR020095">
    <property type="entry name" value="PsdUridine_synth_TruA_C"/>
</dbReference>
<dbReference type="InterPro" id="IPR020094">
    <property type="entry name" value="TruA/RsuA/RluB/E/F_N"/>
</dbReference>
<dbReference type="NCBIfam" id="TIGR00071">
    <property type="entry name" value="hisT_truA"/>
    <property type="match status" value="1"/>
</dbReference>
<dbReference type="PANTHER" id="PTHR11142">
    <property type="entry name" value="PSEUDOURIDYLATE SYNTHASE"/>
    <property type="match status" value="1"/>
</dbReference>
<dbReference type="PANTHER" id="PTHR11142:SF0">
    <property type="entry name" value="TRNA PSEUDOURIDINE SYNTHASE-LIKE 1"/>
    <property type="match status" value="1"/>
</dbReference>
<dbReference type="Pfam" id="PF01416">
    <property type="entry name" value="PseudoU_synth_1"/>
    <property type="match status" value="2"/>
</dbReference>
<dbReference type="PIRSF" id="PIRSF001430">
    <property type="entry name" value="tRNA_psdUrid_synth"/>
    <property type="match status" value="1"/>
</dbReference>
<dbReference type="SUPFAM" id="SSF55120">
    <property type="entry name" value="Pseudouridine synthase"/>
    <property type="match status" value="1"/>
</dbReference>
<accession>Q03ZL3</accession>
<name>TRUA_LEUMM</name>
<gene>
    <name evidence="1" type="primary">truA</name>
    <name type="ordered locus">LEUM_0228</name>
</gene>
<reference key="1">
    <citation type="journal article" date="2006" name="Proc. Natl. Acad. Sci. U.S.A.">
        <title>Comparative genomics of the lactic acid bacteria.</title>
        <authorList>
            <person name="Makarova K.S."/>
            <person name="Slesarev A."/>
            <person name="Wolf Y.I."/>
            <person name="Sorokin A."/>
            <person name="Mirkin B."/>
            <person name="Koonin E.V."/>
            <person name="Pavlov A."/>
            <person name="Pavlova N."/>
            <person name="Karamychev V."/>
            <person name="Polouchine N."/>
            <person name="Shakhova V."/>
            <person name="Grigoriev I."/>
            <person name="Lou Y."/>
            <person name="Rohksar D."/>
            <person name="Lucas S."/>
            <person name="Huang K."/>
            <person name="Goodstein D.M."/>
            <person name="Hawkins T."/>
            <person name="Plengvidhya V."/>
            <person name="Welker D."/>
            <person name="Hughes J."/>
            <person name="Goh Y."/>
            <person name="Benson A."/>
            <person name="Baldwin K."/>
            <person name="Lee J.-H."/>
            <person name="Diaz-Muniz I."/>
            <person name="Dosti B."/>
            <person name="Smeianov V."/>
            <person name="Wechter W."/>
            <person name="Barabote R."/>
            <person name="Lorca G."/>
            <person name="Altermann E."/>
            <person name="Barrangou R."/>
            <person name="Ganesan B."/>
            <person name="Xie Y."/>
            <person name="Rawsthorne H."/>
            <person name="Tamir D."/>
            <person name="Parker C."/>
            <person name="Breidt F."/>
            <person name="Broadbent J.R."/>
            <person name="Hutkins R."/>
            <person name="O'Sullivan D."/>
            <person name="Steele J."/>
            <person name="Unlu G."/>
            <person name="Saier M.H. Jr."/>
            <person name="Klaenhammer T."/>
            <person name="Richardson P."/>
            <person name="Kozyavkin S."/>
            <person name="Weimer B.C."/>
            <person name="Mills D.A."/>
        </authorList>
    </citation>
    <scope>NUCLEOTIDE SEQUENCE [LARGE SCALE GENOMIC DNA]</scope>
    <source>
        <strain>ATCC 8293 / DSM 20343 / BCRC 11652 / CCM 1803 / JCM 6124 / NCDO 523 / NBRC 100496 / NCIMB 8023 / NCTC 12954 / NRRL B-1118 / 37Y</strain>
    </source>
</reference>
<comment type="function">
    <text evidence="1">Formation of pseudouridine at positions 38, 39 and 40 in the anticodon stem and loop of transfer RNAs.</text>
</comment>
<comment type="catalytic activity">
    <reaction evidence="1">
        <text>uridine(38/39/40) in tRNA = pseudouridine(38/39/40) in tRNA</text>
        <dbReference type="Rhea" id="RHEA:22376"/>
        <dbReference type="Rhea" id="RHEA-COMP:10085"/>
        <dbReference type="Rhea" id="RHEA-COMP:10087"/>
        <dbReference type="ChEBI" id="CHEBI:65314"/>
        <dbReference type="ChEBI" id="CHEBI:65315"/>
        <dbReference type="EC" id="5.4.99.12"/>
    </reaction>
</comment>
<comment type="subunit">
    <text evidence="1">Homodimer.</text>
</comment>
<comment type="similarity">
    <text evidence="1">Belongs to the tRNA pseudouridine synthase TruA family.</text>
</comment>
<evidence type="ECO:0000255" key="1">
    <source>
        <dbReference type="HAMAP-Rule" id="MF_00171"/>
    </source>
</evidence>
<proteinExistence type="inferred from homology"/>
<organism>
    <name type="scientific">Leuconostoc mesenteroides subsp. mesenteroides (strain ATCC 8293 / DSM 20343 / BCRC 11652 / CCM 1803 / JCM 6124 / NCDO 523 / NBRC 100496 / NCIMB 8023 / NCTC 12954 / NRRL B-1118 / 37Y)</name>
    <dbReference type="NCBI Taxonomy" id="203120"/>
    <lineage>
        <taxon>Bacteria</taxon>
        <taxon>Bacillati</taxon>
        <taxon>Bacillota</taxon>
        <taxon>Bacilli</taxon>
        <taxon>Lactobacillales</taxon>
        <taxon>Lactobacillaceae</taxon>
        <taxon>Leuconostoc</taxon>
    </lineage>
</organism>